<evidence type="ECO:0000269" key="1">
    <source>
    </source>
</evidence>
<evidence type="ECO:0000269" key="2">
    <source>
    </source>
</evidence>
<name>SRO1_SCHPO</name>
<protein>
    <recommendedName>
        <fullName>Stress-responsive protein 1</fullName>
    </recommendedName>
</protein>
<keyword id="KW-0496">Mitochondrion</keyword>
<keyword id="KW-1185">Reference proteome</keyword>
<keyword id="KW-0346">Stress response</keyword>
<proteinExistence type="evidence at transcript level"/>
<gene>
    <name type="primary">sro1</name>
    <name type="ORF">SPBC1347.11</name>
</gene>
<sequence>MFSILKQGVISKSLLAATSLKATASRFSFSTSVASRVDGTKNGWSFTASNVADQTTDIGINSESAMSCNDQEQPLSFYVQTVRDDLNSPNWGAEQRKGAFDWEVSA</sequence>
<dbReference type="EMBL" id="CU329671">
    <property type="protein sequence ID" value="CAB37442.1"/>
    <property type="molecule type" value="Genomic_DNA"/>
</dbReference>
<dbReference type="PIR" id="T39399">
    <property type="entry name" value="T39399"/>
</dbReference>
<dbReference type="RefSeq" id="NP_596703.1">
    <property type="nucleotide sequence ID" value="NM_001022627.2"/>
</dbReference>
<dbReference type="BioGRID" id="276673">
    <property type="interactions" value="6"/>
</dbReference>
<dbReference type="STRING" id="284812.O94629"/>
<dbReference type="iPTMnet" id="O94629"/>
<dbReference type="PaxDb" id="4896-SPBC1347.11.1"/>
<dbReference type="EnsemblFungi" id="SPBC1347.11.1">
    <property type="protein sequence ID" value="SPBC1347.11.1:pep"/>
    <property type="gene ID" value="SPBC1347.11"/>
</dbReference>
<dbReference type="GeneID" id="2540136"/>
<dbReference type="KEGG" id="spo:2540136"/>
<dbReference type="PomBase" id="SPBC1347.11">
    <property type="gene designation" value="sro1"/>
</dbReference>
<dbReference type="VEuPathDB" id="FungiDB:SPBC1347.11"/>
<dbReference type="HOGENOM" id="CLU_2224744_0_0_1"/>
<dbReference type="InParanoid" id="O94629"/>
<dbReference type="PRO" id="PR:O94629"/>
<dbReference type="Proteomes" id="UP000002485">
    <property type="component" value="Chromosome II"/>
</dbReference>
<dbReference type="GO" id="GO:0005739">
    <property type="term" value="C:mitochondrion"/>
    <property type="evidence" value="ECO:0000314"/>
    <property type="project" value="PomBase"/>
</dbReference>
<dbReference type="GO" id="GO:0034599">
    <property type="term" value="P:cellular response to oxidative stress"/>
    <property type="evidence" value="ECO:0000315"/>
    <property type="project" value="PomBase"/>
</dbReference>
<organism>
    <name type="scientific">Schizosaccharomyces pombe (strain 972 / ATCC 24843)</name>
    <name type="common">Fission yeast</name>
    <dbReference type="NCBI Taxonomy" id="284812"/>
    <lineage>
        <taxon>Eukaryota</taxon>
        <taxon>Fungi</taxon>
        <taxon>Dikarya</taxon>
        <taxon>Ascomycota</taxon>
        <taxon>Taphrinomycotina</taxon>
        <taxon>Schizosaccharomycetes</taxon>
        <taxon>Schizosaccharomycetales</taxon>
        <taxon>Schizosaccharomycetaceae</taxon>
        <taxon>Schizosaccharomyces</taxon>
    </lineage>
</organism>
<comment type="function">
    <text evidence="2">Stress-responsive protein that may play a role in regulation of cell cycle.</text>
</comment>
<comment type="subcellular location">
    <subcellularLocation>
        <location evidence="1 2">Mitochondrion</location>
    </subcellularLocation>
</comment>
<comment type="induction">
    <text evidence="2">Expression is up-regulated by heat and in response to hydroxyurea. This regulation is under the control of the protein kinases sty1 and rad3.</text>
</comment>
<comment type="disruption phenotype">
    <text evidence="2">Leads to reduced growth rate and altered ROS generation during stress conditions like heat or treatment by hydroxyurea.</text>
</comment>
<accession>O94629</accession>
<reference key="1">
    <citation type="journal article" date="2002" name="Nature">
        <title>The genome sequence of Schizosaccharomyces pombe.</title>
        <authorList>
            <person name="Wood V."/>
            <person name="Gwilliam R."/>
            <person name="Rajandream M.A."/>
            <person name="Lyne M.H."/>
            <person name="Lyne R."/>
            <person name="Stewart A."/>
            <person name="Sgouros J.G."/>
            <person name="Peat N."/>
            <person name="Hayles J."/>
            <person name="Baker S.G."/>
            <person name="Basham D."/>
            <person name="Bowman S."/>
            <person name="Brooks K."/>
            <person name="Brown D."/>
            <person name="Brown S."/>
            <person name="Chillingworth T."/>
            <person name="Churcher C.M."/>
            <person name="Collins M."/>
            <person name="Connor R."/>
            <person name="Cronin A."/>
            <person name="Davis P."/>
            <person name="Feltwell T."/>
            <person name="Fraser A."/>
            <person name="Gentles S."/>
            <person name="Goble A."/>
            <person name="Hamlin N."/>
            <person name="Harris D.E."/>
            <person name="Hidalgo J."/>
            <person name="Hodgson G."/>
            <person name="Holroyd S."/>
            <person name="Hornsby T."/>
            <person name="Howarth S."/>
            <person name="Huckle E.J."/>
            <person name="Hunt S."/>
            <person name="Jagels K."/>
            <person name="James K.D."/>
            <person name="Jones L."/>
            <person name="Jones M."/>
            <person name="Leather S."/>
            <person name="McDonald S."/>
            <person name="McLean J."/>
            <person name="Mooney P."/>
            <person name="Moule S."/>
            <person name="Mungall K.L."/>
            <person name="Murphy L.D."/>
            <person name="Niblett D."/>
            <person name="Odell C."/>
            <person name="Oliver K."/>
            <person name="O'Neil S."/>
            <person name="Pearson D."/>
            <person name="Quail M.A."/>
            <person name="Rabbinowitsch E."/>
            <person name="Rutherford K.M."/>
            <person name="Rutter S."/>
            <person name="Saunders D."/>
            <person name="Seeger K."/>
            <person name="Sharp S."/>
            <person name="Skelton J."/>
            <person name="Simmonds M.N."/>
            <person name="Squares R."/>
            <person name="Squares S."/>
            <person name="Stevens K."/>
            <person name="Taylor K."/>
            <person name="Taylor R.G."/>
            <person name="Tivey A."/>
            <person name="Walsh S.V."/>
            <person name="Warren T."/>
            <person name="Whitehead S."/>
            <person name="Woodward J.R."/>
            <person name="Volckaert G."/>
            <person name="Aert R."/>
            <person name="Robben J."/>
            <person name="Grymonprez B."/>
            <person name="Weltjens I."/>
            <person name="Vanstreels E."/>
            <person name="Rieger M."/>
            <person name="Schaefer M."/>
            <person name="Mueller-Auer S."/>
            <person name="Gabel C."/>
            <person name="Fuchs M."/>
            <person name="Duesterhoeft A."/>
            <person name="Fritzc C."/>
            <person name="Holzer E."/>
            <person name="Moestl D."/>
            <person name="Hilbert H."/>
            <person name="Borzym K."/>
            <person name="Langer I."/>
            <person name="Beck A."/>
            <person name="Lehrach H."/>
            <person name="Reinhardt R."/>
            <person name="Pohl T.M."/>
            <person name="Eger P."/>
            <person name="Zimmermann W."/>
            <person name="Wedler H."/>
            <person name="Wambutt R."/>
            <person name="Purnelle B."/>
            <person name="Goffeau A."/>
            <person name="Cadieu E."/>
            <person name="Dreano S."/>
            <person name="Gloux S."/>
            <person name="Lelaure V."/>
            <person name="Mottier S."/>
            <person name="Galibert F."/>
            <person name="Aves S.J."/>
            <person name="Xiang Z."/>
            <person name="Hunt C."/>
            <person name="Moore K."/>
            <person name="Hurst S.M."/>
            <person name="Lucas M."/>
            <person name="Rochet M."/>
            <person name="Gaillardin C."/>
            <person name="Tallada V.A."/>
            <person name="Garzon A."/>
            <person name="Thode G."/>
            <person name="Daga R.R."/>
            <person name="Cruzado L."/>
            <person name="Jimenez J."/>
            <person name="Sanchez M."/>
            <person name="del Rey F."/>
            <person name="Benito J."/>
            <person name="Dominguez A."/>
            <person name="Revuelta J.L."/>
            <person name="Moreno S."/>
            <person name="Armstrong J."/>
            <person name="Forsburg S.L."/>
            <person name="Cerutti L."/>
            <person name="Lowe T."/>
            <person name="McCombie W.R."/>
            <person name="Paulsen I."/>
            <person name="Potashkin J."/>
            <person name="Shpakovski G.V."/>
            <person name="Ussery D."/>
            <person name="Barrell B.G."/>
            <person name="Nurse P."/>
        </authorList>
    </citation>
    <scope>NUCLEOTIDE SEQUENCE [LARGE SCALE GENOMIC DNA]</scope>
    <source>
        <strain>972 / ATCC 24843</strain>
    </source>
</reference>
<reference key="2">
    <citation type="journal article" date="2006" name="Nat. Biotechnol.">
        <title>ORFeome cloning and global analysis of protein localization in the fission yeast Schizosaccharomyces pombe.</title>
        <authorList>
            <person name="Matsuyama A."/>
            <person name="Arai R."/>
            <person name="Yashiroda Y."/>
            <person name="Shirai A."/>
            <person name="Kamata A."/>
            <person name="Sekido S."/>
            <person name="Kobayashi Y."/>
            <person name="Hashimoto A."/>
            <person name="Hamamoto M."/>
            <person name="Hiraoka Y."/>
            <person name="Horinouchi S."/>
            <person name="Yoshida M."/>
        </authorList>
    </citation>
    <scope>SUBCELLULAR LOCATION [LARGE SCALE ANALYSIS]</scope>
</reference>
<reference key="3">
    <citation type="journal article" date="2008" name="FEMS Yeast Res.">
        <title>Characterization of Sro1, a novel stress responsive protein in Schizosaccharomyces pombe.</title>
        <authorList>
            <person name="Sundaram G."/>
            <person name="Palchaudhuri S."/>
            <person name="Chaudhuri S."/>
            <person name="Karunanithi S."/>
            <person name="Chattopadhyay D."/>
        </authorList>
    </citation>
    <scope>INDUCTION</scope>
    <scope>FUNCTION</scope>
    <scope>SUBCELLULAR LOCATION</scope>
    <scope>DISRUPTION PHENOTYPE</scope>
</reference>
<feature type="chain" id="PRO_0000116756" description="Stress-responsive protein 1">
    <location>
        <begin position="1"/>
        <end position="106"/>
    </location>
</feature>